<accession>P0DRC1</accession>
<comment type="function">
    <text evidence="1">Alpha-toxins act on postsynaptic membranes, they bind to the nicotinic acetylcholine receptors (nAChR) and thus inhibit them. This toxin competes with alpha-bungarotoxin for binding to orthosteric sites on muscle-type T.carlifornicus (IC(50)=1080 nM) and human alpha-7/CHRNA7 nAChRs (IC(50)=14.13 uM).</text>
</comment>
<comment type="subcellular location">
    <subcellularLocation>
        <location evidence="1">Secreted</location>
    </subcellularLocation>
    <subcellularLocation>
        <location evidence="3">Nematocyst</location>
    </subcellularLocation>
</comment>
<comment type="domain">
    <text evidence="3">The presence of a 'disulfide through disulfide knot' structurally defines this protein as a knottin.</text>
</comment>
<comment type="mass spectrometry" mass="4653.4" method="MALDI" evidence="1"/>
<comment type="miscellaneous">
    <text evidence="1">Negative results: does not show activity on rat TRPV1, human TRPV3, rat TRPA1 channels, the human ghrelin receptor, human neurotensin receptor 1, rat ASIC1a and ASIC3 channels.</text>
</comment>
<keyword id="KW-0002">3D-structure</keyword>
<keyword id="KW-0008">Acetylcholine receptor inhibiting toxin</keyword>
<keyword id="KW-0165">Cleavage on pair of basic residues</keyword>
<keyword id="KW-0903">Direct protein sequencing</keyword>
<keyword id="KW-1015">Disulfide bond</keyword>
<keyword id="KW-0960">Knottin</keyword>
<keyword id="KW-0166">Nematocyst</keyword>
<keyword id="KW-0528">Neurotoxin</keyword>
<keyword id="KW-0629">Postsynaptic neurotoxin</keyword>
<keyword id="KW-0964">Secreted</keyword>
<keyword id="KW-0732">Signal</keyword>
<keyword id="KW-0800">Toxin</keyword>
<sequence length="66" mass="7516">MASKIFFVLAVFLVMSAVLPESFAGCKNLNSHCYRQHRECCHGLVCRRPNYGNGRGILWKCVRAKK</sequence>
<protein>
    <recommendedName>
        <fullName evidence="4">Alpha-actitoxin-Ms11a-2</fullName>
        <shortName evidence="4">Alpha-AITX-Ms11a-2</shortName>
    </recommendedName>
    <alternativeName>
        <fullName evidence="2">Alpha-anmTX-Ms11a-2</fullName>
    </alternativeName>
</protein>
<evidence type="ECO:0000269" key="1">
    <source>
    </source>
</evidence>
<evidence type="ECO:0000303" key="2">
    <source>
    </source>
</evidence>
<evidence type="ECO:0000305" key="3"/>
<evidence type="ECO:0000305" key="4">
    <source>
    </source>
</evidence>
<evidence type="ECO:0007744" key="5">
    <source>
        <dbReference type="PDB" id="6XYH"/>
    </source>
</evidence>
<evidence type="ECO:0007829" key="6">
    <source>
        <dbReference type="PDB" id="6XYH"/>
    </source>
</evidence>
<proteinExistence type="evidence at protein level"/>
<dbReference type="EMBL" id="ON605614">
    <property type="protein sequence ID" value="WCB99796.1"/>
    <property type="molecule type" value="mRNA"/>
</dbReference>
<dbReference type="PDB" id="6XYH">
    <property type="method" value="NMR"/>
    <property type="chains" value="A=25-64"/>
</dbReference>
<dbReference type="PDBsum" id="6XYH"/>
<dbReference type="SMR" id="P0DRC1"/>
<dbReference type="GO" id="GO:0005576">
    <property type="term" value="C:extracellular region"/>
    <property type="evidence" value="ECO:0007669"/>
    <property type="project" value="UniProtKB-SubCell"/>
</dbReference>
<dbReference type="GO" id="GO:0035792">
    <property type="term" value="C:host cell postsynaptic membrane"/>
    <property type="evidence" value="ECO:0007669"/>
    <property type="project" value="UniProtKB-KW"/>
</dbReference>
<dbReference type="GO" id="GO:0042151">
    <property type="term" value="C:nematocyst"/>
    <property type="evidence" value="ECO:0007669"/>
    <property type="project" value="UniProtKB-SubCell"/>
</dbReference>
<dbReference type="GO" id="GO:0030550">
    <property type="term" value="F:acetylcholine receptor inhibitor activity"/>
    <property type="evidence" value="ECO:0007669"/>
    <property type="project" value="UniProtKB-KW"/>
</dbReference>
<dbReference type="GO" id="GO:0090729">
    <property type="term" value="F:toxin activity"/>
    <property type="evidence" value="ECO:0007669"/>
    <property type="project" value="UniProtKB-KW"/>
</dbReference>
<feature type="signal peptide" evidence="4">
    <location>
        <begin position="1"/>
        <end position="24"/>
    </location>
</feature>
<feature type="chain" id="PRO_0000459528" description="Alpha-actitoxin-Ms11a-2">
    <location>
        <begin position="25"/>
        <end position="64"/>
    </location>
</feature>
<feature type="disulfide bond" evidence="1 5">
    <location>
        <begin position="26"/>
        <end position="41"/>
    </location>
</feature>
<feature type="disulfide bond" evidence="1 5">
    <location>
        <begin position="33"/>
        <end position="46"/>
    </location>
</feature>
<feature type="disulfide bond" evidence="1 5">
    <location>
        <begin position="40"/>
        <end position="61"/>
    </location>
</feature>
<feature type="strand" evidence="6">
    <location>
        <begin position="44"/>
        <end position="47"/>
    </location>
</feature>
<feature type="strand" evidence="6">
    <location>
        <begin position="59"/>
        <end position="63"/>
    </location>
</feature>
<reference key="1">
    <citation type="journal article" date="2022" name="Toxins">
        <title>Peptides from the sea anemone Metridium senile with modified inhibitor cystine knot (ICK) fold inhibit nicotinic acetylcholine receptors.</title>
        <authorList>
            <person name="Kasheverov I.E."/>
            <person name="Logashina Y.A."/>
            <person name="Kornilov F.D."/>
            <person name="Lushpa V.A."/>
            <person name="Maleeva E.E."/>
            <person name="Korolkova Y.V."/>
            <person name="Yu J."/>
            <person name="Zhu X."/>
            <person name="Zhangsun D."/>
            <person name="Luo S."/>
            <person name="Stensvaag K."/>
            <person name="Kudryavtsev D.S."/>
            <person name="Mineev K.S."/>
            <person name="Andreev Y.A."/>
        </authorList>
    </citation>
    <scope>NUCLEOTIDE SEQUENCE [MRNA]</scope>
    <scope>PROTEIN SEQUENCE OF 25-47</scope>
    <scope>FUNCTION</scope>
    <scope>MASS SPECTROMETRY</scope>
    <scope>RECOMBINANT EXPRESSION</scope>
    <scope>STRUCTURE BY NMR OF 25-64</scope>
    <source>
        <tissue>Tentacle</tissue>
    </source>
</reference>
<organism>
    <name type="scientific">Metridium senile</name>
    <name type="common">Brown sea anemone</name>
    <name type="synonym">Frilled sea anemone</name>
    <dbReference type="NCBI Taxonomy" id="6116"/>
    <lineage>
        <taxon>Eukaryota</taxon>
        <taxon>Metazoa</taxon>
        <taxon>Cnidaria</taxon>
        <taxon>Anthozoa</taxon>
        <taxon>Hexacorallia</taxon>
        <taxon>Actiniaria</taxon>
        <taxon>Nynantheae</taxon>
        <taxon>Metridiidae</taxon>
        <taxon>Metridium</taxon>
    </lineage>
</organism>
<name>AITX2_METSE</name>